<sequence>MRILLTNDDGIHAEGLASLERVARTLSDDVWVVAPEQDQSGYAHSLSISEPLRLRKIGEKHFAVRGTPTDCVIMGVKKILPGAPDVILSGINSGANIADDVTYSGTVAGAMEGALLGIRSIALSQGYSYVGEDRIVPYETTEALAPALLKKLVATPLPDGVLLNVNFPNCLPEEVVGTVVTMQGKLVHSLWVDERRDGRGLPYYWLRFGREPVEGKQGTDLHALRNRLVSVTPLQLDLTAHEIRDQLSKALA</sequence>
<reference key="1">
    <citation type="journal article" date="2000" name="DNA Res.">
        <title>Complete genome structure of the nitrogen-fixing symbiotic bacterium Mesorhizobium loti.</title>
        <authorList>
            <person name="Kaneko T."/>
            <person name="Nakamura Y."/>
            <person name="Sato S."/>
            <person name="Asamizu E."/>
            <person name="Kato T."/>
            <person name="Sasamoto S."/>
            <person name="Watanabe A."/>
            <person name="Idesawa K."/>
            <person name="Ishikawa A."/>
            <person name="Kawashima K."/>
            <person name="Kimura T."/>
            <person name="Kishida Y."/>
            <person name="Kiyokawa C."/>
            <person name="Kohara M."/>
            <person name="Matsumoto M."/>
            <person name="Matsuno A."/>
            <person name="Mochizuki Y."/>
            <person name="Nakayama S."/>
            <person name="Nakazaki N."/>
            <person name="Shimpo S."/>
            <person name="Sugimoto M."/>
            <person name="Takeuchi C."/>
            <person name="Yamada M."/>
            <person name="Tabata S."/>
        </authorList>
    </citation>
    <scope>NUCLEOTIDE SEQUENCE [LARGE SCALE GENOMIC DNA]</scope>
    <source>
        <strain>LMG 29417 / CECT 9101 / MAFF 303099</strain>
    </source>
</reference>
<organism>
    <name type="scientific">Mesorhizobium japonicum (strain LMG 29417 / CECT 9101 / MAFF 303099)</name>
    <name type="common">Mesorhizobium loti (strain MAFF 303099)</name>
    <dbReference type="NCBI Taxonomy" id="266835"/>
    <lineage>
        <taxon>Bacteria</taxon>
        <taxon>Pseudomonadati</taxon>
        <taxon>Pseudomonadota</taxon>
        <taxon>Alphaproteobacteria</taxon>
        <taxon>Hyphomicrobiales</taxon>
        <taxon>Phyllobacteriaceae</taxon>
        <taxon>Mesorhizobium</taxon>
    </lineage>
</organism>
<comment type="function">
    <text evidence="1">Nucleotidase that shows phosphatase activity on nucleoside 5'-monophosphates.</text>
</comment>
<comment type="catalytic activity">
    <reaction evidence="1">
        <text>a ribonucleoside 5'-phosphate + H2O = a ribonucleoside + phosphate</text>
        <dbReference type="Rhea" id="RHEA:12484"/>
        <dbReference type="ChEBI" id="CHEBI:15377"/>
        <dbReference type="ChEBI" id="CHEBI:18254"/>
        <dbReference type="ChEBI" id="CHEBI:43474"/>
        <dbReference type="ChEBI" id="CHEBI:58043"/>
        <dbReference type="EC" id="3.1.3.5"/>
    </reaction>
</comment>
<comment type="cofactor">
    <cofactor evidence="1">
        <name>a divalent metal cation</name>
        <dbReference type="ChEBI" id="CHEBI:60240"/>
    </cofactor>
    <text evidence="1">Binds 1 divalent metal cation per subunit.</text>
</comment>
<comment type="subcellular location">
    <subcellularLocation>
        <location evidence="1">Cytoplasm</location>
    </subcellularLocation>
</comment>
<comment type="similarity">
    <text evidence="1">Belongs to the SurE nucleotidase family.</text>
</comment>
<keyword id="KW-0963">Cytoplasm</keyword>
<keyword id="KW-0378">Hydrolase</keyword>
<keyword id="KW-0479">Metal-binding</keyword>
<keyword id="KW-0547">Nucleotide-binding</keyword>
<accession>Q98LC9</accession>
<evidence type="ECO:0000255" key="1">
    <source>
        <dbReference type="HAMAP-Rule" id="MF_00060"/>
    </source>
</evidence>
<name>SURE_RHILO</name>
<feature type="chain" id="PRO_0000111835" description="5'-nucleotidase SurE">
    <location>
        <begin position="1"/>
        <end position="252"/>
    </location>
</feature>
<feature type="binding site" evidence="1">
    <location>
        <position position="8"/>
    </location>
    <ligand>
        <name>a divalent metal cation</name>
        <dbReference type="ChEBI" id="CHEBI:60240"/>
    </ligand>
</feature>
<feature type="binding site" evidence="1">
    <location>
        <position position="9"/>
    </location>
    <ligand>
        <name>a divalent metal cation</name>
        <dbReference type="ChEBI" id="CHEBI:60240"/>
    </ligand>
</feature>
<feature type="binding site" evidence="1">
    <location>
        <position position="40"/>
    </location>
    <ligand>
        <name>a divalent metal cation</name>
        <dbReference type="ChEBI" id="CHEBI:60240"/>
    </ligand>
</feature>
<feature type="binding site" evidence="1">
    <location>
        <position position="92"/>
    </location>
    <ligand>
        <name>a divalent metal cation</name>
        <dbReference type="ChEBI" id="CHEBI:60240"/>
    </ligand>
</feature>
<gene>
    <name evidence="1" type="primary">surE</name>
    <name type="ordered locus">mll1080</name>
</gene>
<protein>
    <recommendedName>
        <fullName evidence="1">5'-nucleotidase SurE</fullName>
        <ecNumber evidence="1">3.1.3.5</ecNumber>
    </recommendedName>
    <alternativeName>
        <fullName evidence="1">Nucleoside 5'-monophosphate phosphohydrolase</fullName>
    </alternativeName>
</protein>
<proteinExistence type="inferred from homology"/>
<dbReference type="EC" id="3.1.3.5" evidence="1"/>
<dbReference type="EMBL" id="BA000012">
    <property type="protein sequence ID" value="BAB48534.1"/>
    <property type="molecule type" value="Genomic_DNA"/>
</dbReference>
<dbReference type="RefSeq" id="WP_010909888.1">
    <property type="nucleotide sequence ID" value="NC_002678.2"/>
</dbReference>
<dbReference type="SMR" id="Q98LC9"/>
<dbReference type="KEGG" id="mlo:mll1080"/>
<dbReference type="PATRIC" id="fig|266835.9.peg.872"/>
<dbReference type="eggNOG" id="COG0496">
    <property type="taxonomic scope" value="Bacteria"/>
</dbReference>
<dbReference type="HOGENOM" id="CLU_045192_1_2_5"/>
<dbReference type="Proteomes" id="UP000000552">
    <property type="component" value="Chromosome"/>
</dbReference>
<dbReference type="GO" id="GO:0005737">
    <property type="term" value="C:cytoplasm"/>
    <property type="evidence" value="ECO:0007669"/>
    <property type="project" value="UniProtKB-SubCell"/>
</dbReference>
<dbReference type="GO" id="GO:0008254">
    <property type="term" value="F:3'-nucleotidase activity"/>
    <property type="evidence" value="ECO:0007669"/>
    <property type="project" value="TreeGrafter"/>
</dbReference>
<dbReference type="GO" id="GO:0008253">
    <property type="term" value="F:5'-nucleotidase activity"/>
    <property type="evidence" value="ECO:0007669"/>
    <property type="project" value="UniProtKB-UniRule"/>
</dbReference>
<dbReference type="GO" id="GO:0004309">
    <property type="term" value="F:exopolyphosphatase activity"/>
    <property type="evidence" value="ECO:0007669"/>
    <property type="project" value="TreeGrafter"/>
</dbReference>
<dbReference type="GO" id="GO:0046872">
    <property type="term" value="F:metal ion binding"/>
    <property type="evidence" value="ECO:0007669"/>
    <property type="project" value="UniProtKB-UniRule"/>
</dbReference>
<dbReference type="GO" id="GO:0000166">
    <property type="term" value="F:nucleotide binding"/>
    <property type="evidence" value="ECO:0007669"/>
    <property type="project" value="UniProtKB-KW"/>
</dbReference>
<dbReference type="FunFam" id="3.40.1210.10:FF:000001">
    <property type="entry name" value="5'/3'-nucleotidase SurE"/>
    <property type="match status" value="1"/>
</dbReference>
<dbReference type="Gene3D" id="3.40.1210.10">
    <property type="entry name" value="Survival protein SurE-like phosphatase/nucleotidase"/>
    <property type="match status" value="1"/>
</dbReference>
<dbReference type="HAMAP" id="MF_00060">
    <property type="entry name" value="SurE"/>
    <property type="match status" value="1"/>
</dbReference>
<dbReference type="InterPro" id="IPR030048">
    <property type="entry name" value="SurE"/>
</dbReference>
<dbReference type="InterPro" id="IPR002828">
    <property type="entry name" value="SurE-like_Pase/nucleotidase"/>
</dbReference>
<dbReference type="InterPro" id="IPR036523">
    <property type="entry name" value="SurE-like_sf"/>
</dbReference>
<dbReference type="NCBIfam" id="NF001490">
    <property type="entry name" value="PRK00346.1-4"/>
    <property type="match status" value="1"/>
</dbReference>
<dbReference type="NCBIfam" id="TIGR00087">
    <property type="entry name" value="surE"/>
    <property type="match status" value="1"/>
</dbReference>
<dbReference type="PANTHER" id="PTHR30457">
    <property type="entry name" value="5'-NUCLEOTIDASE SURE"/>
    <property type="match status" value="1"/>
</dbReference>
<dbReference type="PANTHER" id="PTHR30457:SF12">
    <property type="entry name" value="5'_3'-NUCLEOTIDASE SURE"/>
    <property type="match status" value="1"/>
</dbReference>
<dbReference type="Pfam" id="PF01975">
    <property type="entry name" value="SurE"/>
    <property type="match status" value="1"/>
</dbReference>
<dbReference type="SUPFAM" id="SSF64167">
    <property type="entry name" value="SurE-like"/>
    <property type="match status" value="1"/>
</dbReference>